<protein>
    <recommendedName>
        <fullName evidence="1">Inosine/xanthosine triphosphatase</fullName>
        <shortName evidence="1">ITPase/XTPase</shortName>
        <ecNumber evidence="1">3.6.1.73</ecNumber>
    </recommendedName>
    <alternativeName>
        <fullName evidence="1">Non-canonical purine NTP phosphatase</fullName>
    </alternativeName>
    <alternativeName>
        <fullName evidence="1">Non-standard purine NTP phosphatase</fullName>
    </alternativeName>
    <alternativeName>
        <fullName evidence="1">Nucleoside-triphosphate phosphatase</fullName>
        <shortName evidence="1">NTPase</shortName>
    </alternativeName>
</protein>
<comment type="function">
    <text evidence="1">Phosphatase that hydrolyzes non-canonical purine nucleotides such as XTP and ITP to their respective diphosphate derivatives. Probably excludes non-canonical purines from DNA/RNA precursor pool, thus preventing their incorporation into DNA/RNA and avoiding chromosomal lesions.</text>
</comment>
<comment type="catalytic activity">
    <reaction evidence="1">
        <text>XTP + H2O = XDP + phosphate + H(+)</text>
        <dbReference type="Rhea" id="RHEA:28406"/>
        <dbReference type="ChEBI" id="CHEBI:15377"/>
        <dbReference type="ChEBI" id="CHEBI:15378"/>
        <dbReference type="ChEBI" id="CHEBI:43474"/>
        <dbReference type="ChEBI" id="CHEBI:59884"/>
        <dbReference type="ChEBI" id="CHEBI:61314"/>
        <dbReference type="EC" id="3.6.1.73"/>
    </reaction>
</comment>
<comment type="catalytic activity">
    <reaction evidence="1">
        <text>ITP + H2O = IDP + phosphate + H(+)</text>
        <dbReference type="Rhea" id="RHEA:28330"/>
        <dbReference type="ChEBI" id="CHEBI:15377"/>
        <dbReference type="ChEBI" id="CHEBI:15378"/>
        <dbReference type="ChEBI" id="CHEBI:43474"/>
        <dbReference type="ChEBI" id="CHEBI:58280"/>
        <dbReference type="ChEBI" id="CHEBI:61402"/>
        <dbReference type="EC" id="3.6.1.73"/>
    </reaction>
</comment>
<comment type="cofactor">
    <cofactor evidence="1">
        <name>Mg(2+)</name>
        <dbReference type="ChEBI" id="CHEBI:18420"/>
    </cofactor>
    <cofactor evidence="1">
        <name>Mn(2+)</name>
        <dbReference type="ChEBI" id="CHEBI:29035"/>
    </cofactor>
    <text evidence="1">Binds 1 divalent metal cation per subunit; can use either Mg(2+) or Mn(2+).</text>
</comment>
<comment type="subunit">
    <text evidence="1">Homodimer.</text>
</comment>
<comment type="similarity">
    <text evidence="1">Belongs to the YjjX NTPase family.</text>
</comment>
<reference key="1">
    <citation type="submission" date="2007-02" db="EMBL/GenBank/DDBJ databases">
        <title>Complete sequence of chromosome of Yersinia pestis Pestoides F.</title>
        <authorList>
            <consortium name="US DOE Joint Genome Institute"/>
            <person name="Copeland A."/>
            <person name="Lucas S."/>
            <person name="Lapidus A."/>
            <person name="Barry K."/>
            <person name="Detter J.C."/>
            <person name="Glavina del Rio T."/>
            <person name="Hammon N."/>
            <person name="Israni S."/>
            <person name="Dalin E."/>
            <person name="Tice H."/>
            <person name="Pitluck S."/>
            <person name="Di Bartolo G."/>
            <person name="Chain P."/>
            <person name="Malfatti S."/>
            <person name="Shin M."/>
            <person name="Vergez L."/>
            <person name="Schmutz J."/>
            <person name="Larimer F."/>
            <person name="Land M."/>
            <person name="Hauser L."/>
            <person name="Worsham P."/>
            <person name="Chu M."/>
            <person name="Bearden S."/>
            <person name="Garcia E."/>
            <person name="Richardson P."/>
        </authorList>
    </citation>
    <scope>NUCLEOTIDE SEQUENCE [LARGE SCALE GENOMIC DNA]</scope>
    <source>
        <strain>Pestoides F</strain>
    </source>
</reference>
<accession>A4TQH6</accession>
<feature type="chain" id="PRO_1000056964" description="Inosine/xanthosine triphosphatase">
    <location>
        <begin position="1"/>
        <end position="180"/>
    </location>
</feature>
<feature type="binding site" evidence="1">
    <location>
        <begin position="8"/>
        <end position="13"/>
    </location>
    <ligand>
        <name>substrate</name>
    </ligand>
</feature>
<feature type="binding site" evidence="1">
    <location>
        <position position="38"/>
    </location>
    <ligand>
        <name>Mg(2+)</name>
        <dbReference type="ChEBI" id="CHEBI:18420"/>
    </ligand>
</feature>
<feature type="binding site" evidence="1">
    <location>
        <begin position="68"/>
        <end position="69"/>
    </location>
    <ligand>
        <name>substrate</name>
    </ligand>
</feature>
<feature type="binding site" evidence="1">
    <location>
        <position position="68"/>
    </location>
    <ligand>
        <name>Mg(2+)</name>
        <dbReference type="ChEBI" id="CHEBI:18420"/>
    </ligand>
</feature>
<dbReference type="EC" id="3.6.1.73" evidence="1"/>
<dbReference type="EMBL" id="CP000668">
    <property type="protein sequence ID" value="ABP41538.1"/>
    <property type="molecule type" value="Genomic_DNA"/>
</dbReference>
<dbReference type="SMR" id="A4TQH6"/>
<dbReference type="KEGG" id="ypp:YPDSF_3180"/>
<dbReference type="PATRIC" id="fig|386656.14.peg.1167"/>
<dbReference type="GO" id="GO:0103023">
    <property type="term" value="F:ITPase activity"/>
    <property type="evidence" value="ECO:0007669"/>
    <property type="project" value="UniProtKB-EC"/>
</dbReference>
<dbReference type="GO" id="GO:0046872">
    <property type="term" value="F:metal ion binding"/>
    <property type="evidence" value="ECO:0007669"/>
    <property type="project" value="UniProtKB-KW"/>
</dbReference>
<dbReference type="GO" id="GO:0000166">
    <property type="term" value="F:nucleotide binding"/>
    <property type="evidence" value="ECO:0007669"/>
    <property type="project" value="UniProtKB-KW"/>
</dbReference>
<dbReference type="GO" id="GO:0017111">
    <property type="term" value="F:ribonucleoside triphosphate phosphatase activity"/>
    <property type="evidence" value="ECO:0000250"/>
    <property type="project" value="UniProtKB"/>
</dbReference>
<dbReference type="GO" id="GO:0009117">
    <property type="term" value="P:nucleotide metabolic process"/>
    <property type="evidence" value="ECO:0007669"/>
    <property type="project" value="UniProtKB-KW"/>
</dbReference>
<dbReference type="GO" id="GO:0006772">
    <property type="term" value="P:thiamine metabolic process"/>
    <property type="evidence" value="ECO:0007669"/>
    <property type="project" value="TreeGrafter"/>
</dbReference>
<dbReference type="FunFam" id="3.90.950.10:FF:000002">
    <property type="entry name" value="Inosine/xanthosine triphosphatase"/>
    <property type="match status" value="1"/>
</dbReference>
<dbReference type="Gene3D" id="3.90.950.10">
    <property type="match status" value="1"/>
</dbReference>
<dbReference type="HAMAP" id="MF_00648">
    <property type="entry name" value="Non_canon_purine_NTPase_YjjX"/>
    <property type="match status" value="1"/>
</dbReference>
<dbReference type="InterPro" id="IPR029001">
    <property type="entry name" value="ITPase-like_fam"/>
</dbReference>
<dbReference type="InterPro" id="IPR002786">
    <property type="entry name" value="Non_canon_purine_NTPase"/>
</dbReference>
<dbReference type="InterPro" id="IPR026533">
    <property type="entry name" value="NTPase/PRRC1"/>
</dbReference>
<dbReference type="InterPro" id="IPR050299">
    <property type="entry name" value="YjjX_NTPase"/>
</dbReference>
<dbReference type="NCBIfam" id="TIGR00258">
    <property type="entry name" value="inosine/xanthosine triphosphatase"/>
    <property type="match status" value="1"/>
</dbReference>
<dbReference type="NCBIfam" id="NF003459">
    <property type="entry name" value="PRK05074.1"/>
    <property type="match status" value="1"/>
</dbReference>
<dbReference type="PANTHER" id="PTHR34699">
    <property type="match status" value="1"/>
</dbReference>
<dbReference type="PANTHER" id="PTHR34699:SF2">
    <property type="entry name" value="NON-CANONICAL PURINE NTP PHOSPHATASE_PRRC1 DOMAIN-CONTAINING PROTEIN"/>
    <property type="match status" value="1"/>
</dbReference>
<dbReference type="Pfam" id="PF01931">
    <property type="entry name" value="NTPase_I-T"/>
    <property type="match status" value="1"/>
</dbReference>
<dbReference type="SUPFAM" id="SSF52972">
    <property type="entry name" value="ITPase-like"/>
    <property type="match status" value="1"/>
</dbReference>
<proteinExistence type="inferred from homology"/>
<gene>
    <name type="ordered locus">YPDSF_3180</name>
</gene>
<sequence>MYHVIAATTNPAKINAITLAFDDVYGPGQYRIEGVNVDSGVPLQPIGSTETRIGARQRVKNARQVRPEADFWVGIEAGIEDNMTFAWMVVEHLQARGESRSASLMLPDIILQGIRQGRELGDEMAVLSGISNVKQQGGAIGIFTQGKLTRTSVYHQALLLALVPFHNEIYQRPSPSKPAI</sequence>
<organism>
    <name type="scientific">Yersinia pestis (strain Pestoides F)</name>
    <dbReference type="NCBI Taxonomy" id="386656"/>
    <lineage>
        <taxon>Bacteria</taxon>
        <taxon>Pseudomonadati</taxon>
        <taxon>Pseudomonadota</taxon>
        <taxon>Gammaproteobacteria</taxon>
        <taxon>Enterobacterales</taxon>
        <taxon>Yersiniaceae</taxon>
        <taxon>Yersinia</taxon>
    </lineage>
</organism>
<name>NCPP_YERPP</name>
<evidence type="ECO:0000255" key="1">
    <source>
        <dbReference type="HAMAP-Rule" id="MF_00648"/>
    </source>
</evidence>
<keyword id="KW-0378">Hydrolase</keyword>
<keyword id="KW-0460">Magnesium</keyword>
<keyword id="KW-0464">Manganese</keyword>
<keyword id="KW-0479">Metal-binding</keyword>
<keyword id="KW-0546">Nucleotide metabolism</keyword>
<keyword id="KW-0547">Nucleotide-binding</keyword>